<feature type="chain" id="PRO_1000134613" description="TDP-N-acetylfucosamine:lipid II N-acetylfucosaminyltransferase">
    <location>
        <begin position="1"/>
        <end position="361"/>
    </location>
</feature>
<dbReference type="EC" id="2.4.1.325" evidence="1"/>
<dbReference type="EMBL" id="CP000901">
    <property type="protein sequence ID" value="ABX87981.1"/>
    <property type="molecule type" value="Genomic_DNA"/>
</dbReference>
<dbReference type="RefSeq" id="WP_002211979.1">
    <property type="nucleotide sequence ID" value="NZ_CP009935.1"/>
</dbReference>
<dbReference type="SMR" id="A9R8I9"/>
<dbReference type="CAZy" id="GT56">
    <property type="family name" value="Glycosyltransferase Family 56"/>
</dbReference>
<dbReference type="KEGG" id="ypg:YpAngola_A0521"/>
<dbReference type="PATRIC" id="fig|349746.12.peg.1471"/>
<dbReference type="UniPathway" id="UPA00566"/>
<dbReference type="GO" id="GO:0005886">
    <property type="term" value="C:plasma membrane"/>
    <property type="evidence" value="ECO:0007669"/>
    <property type="project" value="UniProtKB-SubCell"/>
</dbReference>
<dbReference type="GO" id="GO:0102031">
    <property type="term" value="F:4-acetamido-4,6-dideoxy-D-galactose transferase activity"/>
    <property type="evidence" value="ECO:0007669"/>
    <property type="project" value="UniProtKB-EC"/>
</dbReference>
<dbReference type="GO" id="GO:0008417">
    <property type="term" value="F:fucosyltransferase activity"/>
    <property type="evidence" value="ECO:0007669"/>
    <property type="project" value="InterPro"/>
</dbReference>
<dbReference type="GO" id="GO:0009246">
    <property type="term" value="P:enterobacterial common antigen biosynthetic process"/>
    <property type="evidence" value="ECO:0007669"/>
    <property type="project" value="UniProtKB-UniRule"/>
</dbReference>
<dbReference type="GO" id="GO:0036065">
    <property type="term" value="P:fucosylation"/>
    <property type="evidence" value="ECO:0007669"/>
    <property type="project" value="InterPro"/>
</dbReference>
<dbReference type="HAMAP" id="MF_01002">
    <property type="entry name" value="WecF_RffT"/>
    <property type="match status" value="1"/>
</dbReference>
<dbReference type="InterPro" id="IPR009993">
    <property type="entry name" value="WecF"/>
</dbReference>
<dbReference type="NCBIfam" id="NF002753">
    <property type="entry name" value="PRK02797.1-2"/>
    <property type="match status" value="1"/>
</dbReference>
<dbReference type="Pfam" id="PF07429">
    <property type="entry name" value="Glyco_transf_56"/>
    <property type="match status" value="1"/>
</dbReference>
<accession>A9R8I9</accession>
<sequence>MITLTHVLGSDIPHHNLTVLRFFNDVLAKCLPVEQVRHFMVAAKETAPFSSFPQLDINTYSDKKALAEAVIARAQADRSARFFWHGQFNVTLWLALLSGKIKPGQVYWHVWGADLYEDAKSLKFRLFYLLRRIAQGRVGHVFATRGDLIHYQQRHPRVPASLLYFPTRMDPALTAINIDKPLAGPMTILVGNSGDTTNRHIEALKAIHQQFGPDVRVIIPMGYPANNEAYIEQVRQAGLALFSQDNLRILTEQIPFDDYLNILRECDLGYFIFNRQQGIGTLCLLTQFGVPFVLSRKNPFWQDLAEQHIPVFFYGDTLDEPMIREAQRQLAGLDKQAIAFFNPNYIEGWKQALALAAGEHP</sequence>
<comment type="function">
    <text evidence="1">Catalyzes the synthesis of Und-PP-GlcNAc-ManNAcA-Fuc4NAc (Lipid III), the third lipid-linked intermediate involved in ECA synthesis.</text>
</comment>
<comment type="catalytic activity">
    <reaction evidence="1">
        <text>beta-D-ManNAcA-(1-&gt;4)-alpha-D-GlcNAc-di-trans,octa-cis-undecaprenyl diphosphate + dTDP-4-acetamido-4,6-dideoxy-alpha-D-galactose = alpha-D-FucNAc4-(1-&gt;4)-beta-D-ManNAcA-(1-&gt;4)-D-GlcNAc-undecaprenyl diphosphate + dTDP + H(+)</text>
        <dbReference type="Rhea" id="RHEA:28759"/>
        <dbReference type="ChEBI" id="CHEBI:15378"/>
        <dbReference type="ChEBI" id="CHEBI:58369"/>
        <dbReference type="ChEBI" id="CHEBI:61495"/>
        <dbReference type="ChEBI" id="CHEBI:61496"/>
        <dbReference type="ChEBI" id="CHEBI:68493"/>
        <dbReference type="EC" id="2.4.1.325"/>
    </reaction>
</comment>
<comment type="pathway">
    <text evidence="1">Bacterial outer membrane biogenesis; enterobacterial common antigen biosynthesis.</text>
</comment>
<comment type="subcellular location">
    <subcellularLocation>
        <location evidence="1">Cell inner membrane</location>
        <topology evidence="1">Peripheral membrane protein</topology>
    </subcellularLocation>
</comment>
<comment type="similarity">
    <text evidence="1">Belongs to the glycosyltransferase 56 family.</text>
</comment>
<protein>
    <recommendedName>
        <fullName evidence="1">TDP-N-acetylfucosamine:lipid II N-acetylfucosaminyltransferase</fullName>
        <ecNumber evidence="1">2.4.1.325</ecNumber>
    </recommendedName>
    <alternativeName>
        <fullName evidence="1">4-alpha-L-fucosyltransferase</fullName>
    </alternativeName>
    <alternativeName>
        <fullName evidence="1">TDP-Fuc4NAc:lipid II Fuc4NAc transferase</fullName>
        <shortName evidence="1">Fuc4NAc transferase</shortName>
    </alternativeName>
</protein>
<name>WECF_YERPG</name>
<gene>
    <name evidence="1" type="primary">wecF</name>
    <name evidence="1" type="synonym">rffT</name>
    <name type="ordered locus">YpAngola_A0521</name>
</gene>
<reference key="1">
    <citation type="journal article" date="2010" name="J. Bacteriol.">
        <title>Genome sequence of the deep-rooted Yersinia pestis strain Angola reveals new insights into the evolution and pangenome of the plague bacterium.</title>
        <authorList>
            <person name="Eppinger M."/>
            <person name="Worsham P.L."/>
            <person name="Nikolich M.P."/>
            <person name="Riley D.R."/>
            <person name="Sebastian Y."/>
            <person name="Mou S."/>
            <person name="Achtman M."/>
            <person name="Lindler L.E."/>
            <person name="Ravel J."/>
        </authorList>
    </citation>
    <scope>NUCLEOTIDE SEQUENCE [LARGE SCALE GENOMIC DNA]</scope>
    <source>
        <strain>Angola</strain>
    </source>
</reference>
<evidence type="ECO:0000255" key="1">
    <source>
        <dbReference type="HAMAP-Rule" id="MF_01002"/>
    </source>
</evidence>
<organism>
    <name type="scientific">Yersinia pestis bv. Antiqua (strain Angola)</name>
    <dbReference type="NCBI Taxonomy" id="349746"/>
    <lineage>
        <taxon>Bacteria</taxon>
        <taxon>Pseudomonadati</taxon>
        <taxon>Pseudomonadota</taxon>
        <taxon>Gammaproteobacteria</taxon>
        <taxon>Enterobacterales</taxon>
        <taxon>Yersiniaceae</taxon>
        <taxon>Yersinia</taxon>
    </lineage>
</organism>
<keyword id="KW-0997">Cell inner membrane</keyword>
<keyword id="KW-1003">Cell membrane</keyword>
<keyword id="KW-0328">Glycosyltransferase</keyword>
<keyword id="KW-0472">Membrane</keyword>
<keyword id="KW-0808">Transferase</keyword>
<proteinExistence type="inferred from homology"/>